<keyword id="KW-0324">Glycolysis</keyword>
<keyword id="KW-0456">Lyase</keyword>
<keyword id="KW-1185">Reference proteome</keyword>
<comment type="catalytic activity">
    <reaction>
        <text>beta-D-fructose 1,6-bisphosphate = D-glyceraldehyde 3-phosphate + dihydroxyacetone phosphate</text>
        <dbReference type="Rhea" id="RHEA:14729"/>
        <dbReference type="ChEBI" id="CHEBI:32966"/>
        <dbReference type="ChEBI" id="CHEBI:57642"/>
        <dbReference type="ChEBI" id="CHEBI:59776"/>
        <dbReference type="EC" id="4.1.2.13"/>
    </reaction>
</comment>
<comment type="pathway">
    <text>Carbohydrate degradation; glycolysis; D-glyceraldehyde 3-phosphate and glycerone phosphate from D-glucose: step 4/4.</text>
</comment>
<comment type="similarity">
    <text evidence="1">Belongs to the class I fructose-bisphosphate aldolase family.</text>
</comment>
<feature type="chain" id="PRO_0000216916" description="Probable fructose-bisphosphate aldolase class 1">
    <location>
        <begin position="1"/>
        <end position="334"/>
    </location>
</feature>
<organism>
    <name type="scientific">Xanthomonas campestris pv. campestris (strain ATCC 33913 / DSM 3586 / NCPPB 528 / LMG 568 / P 25)</name>
    <dbReference type="NCBI Taxonomy" id="190485"/>
    <lineage>
        <taxon>Bacteria</taxon>
        <taxon>Pseudomonadati</taxon>
        <taxon>Pseudomonadota</taxon>
        <taxon>Gammaproteobacteria</taxon>
        <taxon>Lysobacterales</taxon>
        <taxon>Lysobacteraceae</taxon>
        <taxon>Xanthomonas</taxon>
    </lineage>
</organism>
<gene>
    <name type="ordered locus">XCC3185</name>
</gene>
<proteinExistence type="inferred from homology"/>
<sequence length="334" mass="36276">MSIEQLAETAQAMVAPGKGIIAIDESTSTIAKRFSGVGIENTEENRRAYRELLLTTPKLSDYISGAILFDETIRQKTKDGVPFAKYMADHGIIPGIKVDKGAQPLAGMPGELVTEGLDGLRARLEEYYTLGARFAKWRAVINIGEDIPSGTCIEANAHALARYAALCQEQGLVPMVEPEVIMDGDHDIETCYEVTEATLRSLFGALYEQNVVLEGTILKASMVISGKGCEEQASVEEVAESTVMCLKSTVPAILPGIVFLSGGQTDEQSTAHLNEMHQLGNLPWPLSFSYGRAMQQAALKLWSKDMTGNYAKAQQIIYERAKENGLAALGKWKG</sequence>
<evidence type="ECO:0000305" key="1"/>
<protein>
    <recommendedName>
        <fullName>Probable fructose-bisphosphate aldolase class 1</fullName>
        <ecNumber>4.1.2.13</ecNumber>
    </recommendedName>
    <alternativeName>
        <fullName>Fructose-bisphosphate aldolase class I</fullName>
        <shortName>FBP aldolase</shortName>
    </alternativeName>
</protein>
<reference key="1">
    <citation type="journal article" date="2002" name="Nature">
        <title>Comparison of the genomes of two Xanthomonas pathogens with differing host specificities.</title>
        <authorList>
            <person name="da Silva A.C.R."/>
            <person name="Ferro J.A."/>
            <person name="Reinach F.C."/>
            <person name="Farah C.S."/>
            <person name="Furlan L.R."/>
            <person name="Quaggio R.B."/>
            <person name="Monteiro-Vitorello C.B."/>
            <person name="Van Sluys M.A."/>
            <person name="Almeida N.F. Jr."/>
            <person name="Alves L.M.C."/>
            <person name="do Amaral A.M."/>
            <person name="Bertolini M.C."/>
            <person name="Camargo L.E.A."/>
            <person name="Camarotte G."/>
            <person name="Cannavan F."/>
            <person name="Cardozo J."/>
            <person name="Chambergo F."/>
            <person name="Ciapina L.P."/>
            <person name="Cicarelli R.M.B."/>
            <person name="Coutinho L.L."/>
            <person name="Cursino-Santos J.R."/>
            <person name="El-Dorry H."/>
            <person name="Faria J.B."/>
            <person name="Ferreira A.J.S."/>
            <person name="Ferreira R.C.C."/>
            <person name="Ferro M.I.T."/>
            <person name="Formighieri E.F."/>
            <person name="Franco M.C."/>
            <person name="Greggio C.C."/>
            <person name="Gruber A."/>
            <person name="Katsuyama A.M."/>
            <person name="Kishi L.T."/>
            <person name="Leite R.P."/>
            <person name="Lemos E.G.M."/>
            <person name="Lemos M.V.F."/>
            <person name="Locali E.C."/>
            <person name="Machado M.A."/>
            <person name="Madeira A.M.B.N."/>
            <person name="Martinez-Rossi N.M."/>
            <person name="Martins E.C."/>
            <person name="Meidanis J."/>
            <person name="Menck C.F.M."/>
            <person name="Miyaki C.Y."/>
            <person name="Moon D.H."/>
            <person name="Moreira L.M."/>
            <person name="Novo M.T.M."/>
            <person name="Okura V.K."/>
            <person name="Oliveira M.C."/>
            <person name="Oliveira V.R."/>
            <person name="Pereira H.A."/>
            <person name="Rossi A."/>
            <person name="Sena J.A.D."/>
            <person name="Silva C."/>
            <person name="de Souza R.F."/>
            <person name="Spinola L.A.F."/>
            <person name="Takita M.A."/>
            <person name="Tamura R.E."/>
            <person name="Teixeira E.C."/>
            <person name="Tezza R.I.D."/>
            <person name="Trindade dos Santos M."/>
            <person name="Truffi D."/>
            <person name="Tsai S.M."/>
            <person name="White F.F."/>
            <person name="Setubal J.C."/>
            <person name="Kitajima J.P."/>
        </authorList>
    </citation>
    <scope>NUCLEOTIDE SEQUENCE [LARGE SCALE GENOMIC DNA]</scope>
    <source>
        <strain>ATCC 33913 / DSM 3586 / NCPPB 528 / LMG 568 / P 25</strain>
    </source>
</reference>
<accession>Q8P5Z7</accession>
<dbReference type="EC" id="4.1.2.13"/>
<dbReference type="EMBL" id="AE008922">
    <property type="protein sequence ID" value="AAM42455.1"/>
    <property type="molecule type" value="Genomic_DNA"/>
</dbReference>
<dbReference type="RefSeq" id="NP_638531.1">
    <property type="nucleotide sequence ID" value="NC_003902.1"/>
</dbReference>
<dbReference type="RefSeq" id="WP_011038292.1">
    <property type="nucleotide sequence ID" value="NC_003902.1"/>
</dbReference>
<dbReference type="SMR" id="Q8P5Z7"/>
<dbReference type="STRING" id="190485.XCC3185"/>
<dbReference type="EnsemblBacteria" id="AAM42455">
    <property type="protein sequence ID" value="AAM42455"/>
    <property type="gene ID" value="XCC3185"/>
</dbReference>
<dbReference type="KEGG" id="xcc:XCC3185"/>
<dbReference type="PATRIC" id="fig|190485.4.peg.3402"/>
<dbReference type="eggNOG" id="COG3588">
    <property type="taxonomic scope" value="Bacteria"/>
</dbReference>
<dbReference type="HOGENOM" id="CLU_031243_0_0_6"/>
<dbReference type="OrthoDB" id="9793595at2"/>
<dbReference type="UniPathway" id="UPA00109">
    <property type="reaction ID" value="UER00183"/>
</dbReference>
<dbReference type="Proteomes" id="UP000001010">
    <property type="component" value="Chromosome"/>
</dbReference>
<dbReference type="GO" id="GO:0004332">
    <property type="term" value="F:fructose-bisphosphate aldolase activity"/>
    <property type="evidence" value="ECO:0007669"/>
    <property type="project" value="UniProtKB-EC"/>
</dbReference>
<dbReference type="GO" id="GO:0006096">
    <property type="term" value="P:glycolytic process"/>
    <property type="evidence" value="ECO:0007669"/>
    <property type="project" value="UniProtKB-UniPathway"/>
</dbReference>
<dbReference type="CDD" id="cd00948">
    <property type="entry name" value="FBP_aldolase_I_a"/>
    <property type="match status" value="1"/>
</dbReference>
<dbReference type="FunFam" id="3.20.20.70:FF:000140">
    <property type="entry name" value="Fructose-bisphosphate aldolase"/>
    <property type="match status" value="1"/>
</dbReference>
<dbReference type="Gene3D" id="3.20.20.70">
    <property type="entry name" value="Aldolase class I"/>
    <property type="match status" value="1"/>
</dbReference>
<dbReference type="InterPro" id="IPR029768">
    <property type="entry name" value="Aldolase_I_AS"/>
</dbReference>
<dbReference type="InterPro" id="IPR013785">
    <property type="entry name" value="Aldolase_TIM"/>
</dbReference>
<dbReference type="InterPro" id="IPR000741">
    <property type="entry name" value="FBA_I"/>
</dbReference>
<dbReference type="NCBIfam" id="NF033379">
    <property type="entry name" value="FrucBisAld_I"/>
    <property type="match status" value="1"/>
</dbReference>
<dbReference type="PANTHER" id="PTHR11627">
    <property type="entry name" value="FRUCTOSE-BISPHOSPHATE ALDOLASE"/>
    <property type="match status" value="1"/>
</dbReference>
<dbReference type="Pfam" id="PF00274">
    <property type="entry name" value="Glycolytic"/>
    <property type="match status" value="1"/>
</dbReference>
<dbReference type="SUPFAM" id="SSF51569">
    <property type="entry name" value="Aldolase"/>
    <property type="match status" value="1"/>
</dbReference>
<dbReference type="PROSITE" id="PS00158">
    <property type="entry name" value="ALDOLASE_CLASS_I"/>
    <property type="match status" value="1"/>
</dbReference>
<name>ALF1_XANCP</name>